<reference key="1">
    <citation type="journal article" date="2010" name="J. Bacteriol.">
        <title>Complete genome sequence of the aerobic facultative methanotroph Methylocella silvestris BL2.</title>
        <authorList>
            <person name="Chen Y."/>
            <person name="Crombie A."/>
            <person name="Rahman M.T."/>
            <person name="Dedysh S.N."/>
            <person name="Liesack W."/>
            <person name="Stott M.B."/>
            <person name="Alam M."/>
            <person name="Theisen A.R."/>
            <person name="Murrell J.C."/>
            <person name="Dunfield P.F."/>
        </authorList>
    </citation>
    <scope>NUCLEOTIDE SEQUENCE [LARGE SCALE GENOMIC DNA]</scope>
    <source>
        <strain>DSM 15510 / CIP 108128 / LMG 27833 / NCIMB 13906 / BL2</strain>
    </source>
</reference>
<dbReference type="EC" id="2.5.1.141" evidence="1"/>
<dbReference type="EMBL" id="CP001280">
    <property type="protein sequence ID" value="ACK50208.1"/>
    <property type="molecule type" value="Genomic_DNA"/>
</dbReference>
<dbReference type="RefSeq" id="WP_012590278.1">
    <property type="nucleotide sequence ID" value="NC_011666.1"/>
</dbReference>
<dbReference type="SMR" id="B8EPK3"/>
<dbReference type="STRING" id="395965.Msil_1239"/>
<dbReference type="KEGG" id="msl:Msil_1239"/>
<dbReference type="eggNOG" id="COG0109">
    <property type="taxonomic scope" value="Bacteria"/>
</dbReference>
<dbReference type="HOGENOM" id="CLU_029631_0_2_5"/>
<dbReference type="OrthoDB" id="9814417at2"/>
<dbReference type="UniPathway" id="UPA00834">
    <property type="reaction ID" value="UER00712"/>
</dbReference>
<dbReference type="Proteomes" id="UP000002257">
    <property type="component" value="Chromosome"/>
</dbReference>
<dbReference type="GO" id="GO:0005886">
    <property type="term" value="C:plasma membrane"/>
    <property type="evidence" value="ECO:0007669"/>
    <property type="project" value="UniProtKB-SubCell"/>
</dbReference>
<dbReference type="GO" id="GO:0008495">
    <property type="term" value="F:protoheme IX farnesyltransferase activity"/>
    <property type="evidence" value="ECO:0007669"/>
    <property type="project" value="UniProtKB-UniRule"/>
</dbReference>
<dbReference type="GO" id="GO:0048034">
    <property type="term" value="P:heme O biosynthetic process"/>
    <property type="evidence" value="ECO:0007669"/>
    <property type="project" value="UniProtKB-UniRule"/>
</dbReference>
<dbReference type="CDD" id="cd13957">
    <property type="entry name" value="PT_UbiA_Cox10"/>
    <property type="match status" value="1"/>
</dbReference>
<dbReference type="Gene3D" id="1.10.357.140">
    <property type="entry name" value="UbiA prenyltransferase"/>
    <property type="match status" value="1"/>
</dbReference>
<dbReference type="HAMAP" id="MF_00154">
    <property type="entry name" value="CyoE_CtaB"/>
    <property type="match status" value="1"/>
</dbReference>
<dbReference type="InterPro" id="IPR006369">
    <property type="entry name" value="Protohaem_IX_farnesylTrfase"/>
</dbReference>
<dbReference type="InterPro" id="IPR000537">
    <property type="entry name" value="UbiA_prenyltransferase"/>
</dbReference>
<dbReference type="InterPro" id="IPR030470">
    <property type="entry name" value="UbiA_prenylTrfase_CS"/>
</dbReference>
<dbReference type="InterPro" id="IPR044878">
    <property type="entry name" value="UbiA_sf"/>
</dbReference>
<dbReference type="NCBIfam" id="TIGR01473">
    <property type="entry name" value="cyoE_ctaB"/>
    <property type="match status" value="1"/>
</dbReference>
<dbReference type="NCBIfam" id="NF003349">
    <property type="entry name" value="PRK04375.1-2"/>
    <property type="match status" value="1"/>
</dbReference>
<dbReference type="PANTHER" id="PTHR43448:SF7">
    <property type="entry name" value="4-HYDROXYBENZOATE SOLANESYLTRANSFERASE"/>
    <property type="match status" value="1"/>
</dbReference>
<dbReference type="PANTHER" id="PTHR43448">
    <property type="entry name" value="PROTOHEME IX FARNESYLTRANSFERASE, MITOCHONDRIAL"/>
    <property type="match status" value="1"/>
</dbReference>
<dbReference type="Pfam" id="PF01040">
    <property type="entry name" value="UbiA"/>
    <property type="match status" value="1"/>
</dbReference>
<dbReference type="PROSITE" id="PS00943">
    <property type="entry name" value="UBIA"/>
    <property type="match status" value="1"/>
</dbReference>
<sequence>MSFVSDSNTAIDQAAISIASPADYLALMKPRVMSLVIFTALTGVLIAPTHVNPIIGFASLLAIAAGAGASGALNMWYDSDIDAIMRRTQKRPIPAGRVARESALAFGMVLALLSVITLGFVANWAAAALLAFTIFFYVVIYTMWLKRSTPQNIVIGGAAGAFPPIVAYLAVAGQVSLPALALFAIIFVWTPPHFWALALVKAGDFERAGIPMLPNVKGPDRTRRDILLYTLLLAPIGMTPYFIGFASPAYGLLSFGLGGVMILHAVRVYLAREGDQANRVAMRMFGFSILYLFLLFAAIVAERILALLPISSATPW</sequence>
<gene>
    <name evidence="1" type="primary">ctaB</name>
    <name type="ordered locus">Msil_1239</name>
</gene>
<keyword id="KW-0997">Cell inner membrane</keyword>
<keyword id="KW-1003">Cell membrane</keyword>
<keyword id="KW-0350">Heme biosynthesis</keyword>
<keyword id="KW-0472">Membrane</keyword>
<keyword id="KW-1185">Reference proteome</keyword>
<keyword id="KW-0808">Transferase</keyword>
<keyword id="KW-0812">Transmembrane</keyword>
<keyword id="KW-1133">Transmembrane helix</keyword>
<comment type="function">
    <text evidence="1">Converts heme B (protoheme IX) to heme O by substitution of the vinyl group on carbon 2 of heme B porphyrin ring with a hydroxyethyl farnesyl side group.</text>
</comment>
<comment type="catalytic activity">
    <reaction evidence="1">
        <text>heme b + (2E,6E)-farnesyl diphosphate + H2O = Fe(II)-heme o + diphosphate</text>
        <dbReference type="Rhea" id="RHEA:28070"/>
        <dbReference type="ChEBI" id="CHEBI:15377"/>
        <dbReference type="ChEBI" id="CHEBI:33019"/>
        <dbReference type="ChEBI" id="CHEBI:60344"/>
        <dbReference type="ChEBI" id="CHEBI:60530"/>
        <dbReference type="ChEBI" id="CHEBI:175763"/>
        <dbReference type="EC" id="2.5.1.141"/>
    </reaction>
</comment>
<comment type="pathway">
    <text evidence="1">Porphyrin-containing compound metabolism; heme O biosynthesis; heme O from protoheme: step 1/1.</text>
</comment>
<comment type="subcellular location">
    <subcellularLocation>
        <location evidence="1">Cell inner membrane</location>
        <topology evidence="1">Multi-pass membrane protein</topology>
    </subcellularLocation>
</comment>
<comment type="miscellaneous">
    <text evidence="1">Carbon 2 of the heme B porphyrin ring is defined according to the Fischer nomenclature.</text>
</comment>
<comment type="similarity">
    <text evidence="1">Belongs to the UbiA prenyltransferase family. Protoheme IX farnesyltransferase subfamily.</text>
</comment>
<accession>B8EPK3</accession>
<evidence type="ECO:0000255" key="1">
    <source>
        <dbReference type="HAMAP-Rule" id="MF_00154"/>
    </source>
</evidence>
<proteinExistence type="inferred from homology"/>
<protein>
    <recommendedName>
        <fullName evidence="1">Protoheme IX farnesyltransferase</fullName>
        <ecNumber evidence="1">2.5.1.141</ecNumber>
    </recommendedName>
    <alternativeName>
        <fullName evidence="1">Heme B farnesyltransferase</fullName>
    </alternativeName>
    <alternativeName>
        <fullName evidence="1">Heme O synthase</fullName>
    </alternativeName>
</protein>
<organism>
    <name type="scientific">Methylocella silvestris (strain DSM 15510 / CIP 108128 / LMG 27833 / NCIMB 13906 / BL2)</name>
    <dbReference type="NCBI Taxonomy" id="395965"/>
    <lineage>
        <taxon>Bacteria</taxon>
        <taxon>Pseudomonadati</taxon>
        <taxon>Pseudomonadota</taxon>
        <taxon>Alphaproteobacteria</taxon>
        <taxon>Hyphomicrobiales</taxon>
        <taxon>Beijerinckiaceae</taxon>
        <taxon>Methylocella</taxon>
    </lineage>
</organism>
<feature type="chain" id="PRO_1000203455" description="Protoheme IX farnesyltransferase">
    <location>
        <begin position="1"/>
        <end position="316"/>
    </location>
</feature>
<feature type="transmembrane region" description="Helical" evidence="1">
    <location>
        <begin position="32"/>
        <end position="52"/>
    </location>
</feature>
<feature type="transmembrane region" description="Helical" evidence="1">
    <location>
        <begin position="53"/>
        <end position="73"/>
    </location>
</feature>
<feature type="transmembrane region" description="Helical" evidence="1">
    <location>
        <begin position="98"/>
        <end position="118"/>
    </location>
</feature>
<feature type="transmembrane region" description="Helical" evidence="1">
    <location>
        <begin position="120"/>
        <end position="140"/>
    </location>
</feature>
<feature type="transmembrane region" description="Helical" evidence="1">
    <location>
        <begin position="153"/>
        <end position="173"/>
    </location>
</feature>
<feature type="transmembrane region" description="Helical" evidence="1">
    <location>
        <begin position="180"/>
        <end position="200"/>
    </location>
</feature>
<feature type="transmembrane region" description="Helical" evidence="1">
    <location>
        <begin position="226"/>
        <end position="246"/>
    </location>
</feature>
<feature type="transmembrane region" description="Helical" evidence="1">
    <location>
        <begin position="251"/>
        <end position="271"/>
    </location>
</feature>
<feature type="transmembrane region" description="Helical" evidence="1">
    <location>
        <begin position="280"/>
        <end position="300"/>
    </location>
</feature>
<name>COXX_METSB</name>